<proteinExistence type="inferred from homology"/>
<keyword id="KW-0687">Ribonucleoprotein</keyword>
<keyword id="KW-0689">Ribosomal protein</keyword>
<keyword id="KW-0694">RNA-binding</keyword>
<keyword id="KW-0699">rRNA-binding</keyword>
<keyword id="KW-0820">tRNA-binding</keyword>
<reference key="1">
    <citation type="journal article" date="2004" name="Proc. Natl. Acad. Sci. U.S.A.">
        <title>Insights into the evolution of Yersinia pestis through whole-genome comparison with Yersinia pseudotuberculosis.</title>
        <authorList>
            <person name="Chain P.S.G."/>
            <person name="Carniel E."/>
            <person name="Larimer F.W."/>
            <person name="Lamerdin J."/>
            <person name="Stoutland P.O."/>
            <person name="Regala W.M."/>
            <person name="Georgescu A.M."/>
            <person name="Vergez L.M."/>
            <person name="Land M.L."/>
            <person name="Motin V.L."/>
            <person name="Brubaker R.R."/>
            <person name="Fowler J."/>
            <person name="Hinnebusch J."/>
            <person name="Marceau M."/>
            <person name="Medigue C."/>
            <person name="Simonet M."/>
            <person name="Chenal-Francisque V."/>
            <person name="Souza B."/>
            <person name="Dacheux D."/>
            <person name="Elliott J.M."/>
            <person name="Derbise A."/>
            <person name="Hauser L.J."/>
            <person name="Garcia E."/>
        </authorList>
    </citation>
    <scope>NUCLEOTIDE SEQUENCE [LARGE SCALE GENOMIC DNA]</scope>
    <source>
        <strain>IP32953</strain>
    </source>
</reference>
<accession>Q664R5</accession>
<name>RS7_YERPS</name>
<comment type="function">
    <text evidence="1">One of the primary rRNA binding proteins, it binds directly to 16S rRNA where it nucleates assembly of the head domain of the 30S subunit. Is located at the subunit interface close to the decoding center, probably blocks exit of the E-site tRNA.</text>
</comment>
<comment type="subunit">
    <text evidence="1">Part of the 30S ribosomal subunit. Contacts proteins S9 and S11.</text>
</comment>
<comment type="similarity">
    <text evidence="1">Belongs to the universal ribosomal protein uS7 family.</text>
</comment>
<organism>
    <name type="scientific">Yersinia pseudotuberculosis serotype I (strain IP32953)</name>
    <dbReference type="NCBI Taxonomy" id="273123"/>
    <lineage>
        <taxon>Bacteria</taxon>
        <taxon>Pseudomonadati</taxon>
        <taxon>Pseudomonadota</taxon>
        <taxon>Gammaproteobacteria</taxon>
        <taxon>Enterobacterales</taxon>
        <taxon>Yersiniaceae</taxon>
        <taxon>Yersinia</taxon>
    </lineage>
</organism>
<sequence length="156" mass="17606">MPRRRVIGQRKILPDPKFGSELLAKFVNILMVDGKKSTAEAIVYTALETLAQRSGKDFLEAFEVALDNVRPTVEVKSRRVGGSTYQVPVEVRPVRRNALAMRWIVDAARKRGDKSMALRLANELSDAAENKGSAVKKREDVHRMAEANKAFAHYRW</sequence>
<feature type="chain" id="PRO_0000124389" description="Small ribosomal subunit protein uS7">
    <location>
        <begin position="1"/>
        <end position="156"/>
    </location>
</feature>
<gene>
    <name evidence="1" type="primary">rpsG</name>
    <name type="ordered locus">YPTB3704</name>
</gene>
<evidence type="ECO:0000255" key="1">
    <source>
        <dbReference type="HAMAP-Rule" id="MF_00480"/>
    </source>
</evidence>
<evidence type="ECO:0000305" key="2"/>
<protein>
    <recommendedName>
        <fullName evidence="1">Small ribosomal subunit protein uS7</fullName>
    </recommendedName>
    <alternativeName>
        <fullName evidence="2">30S ribosomal protein S7</fullName>
    </alternativeName>
</protein>
<dbReference type="EMBL" id="BX936398">
    <property type="protein sequence ID" value="CAH22942.1"/>
    <property type="molecule type" value="Genomic_DNA"/>
</dbReference>
<dbReference type="RefSeq" id="WP_002212324.1">
    <property type="nucleotide sequence ID" value="NZ_CP009712.1"/>
</dbReference>
<dbReference type="SMR" id="Q664R5"/>
<dbReference type="GeneID" id="97454225"/>
<dbReference type="KEGG" id="ypo:BZ17_2883"/>
<dbReference type="KEGG" id="yps:YPTB3704"/>
<dbReference type="PATRIC" id="fig|273123.14.peg.3024"/>
<dbReference type="Proteomes" id="UP000001011">
    <property type="component" value="Chromosome"/>
</dbReference>
<dbReference type="GO" id="GO:0015935">
    <property type="term" value="C:small ribosomal subunit"/>
    <property type="evidence" value="ECO:0007669"/>
    <property type="project" value="InterPro"/>
</dbReference>
<dbReference type="GO" id="GO:0019843">
    <property type="term" value="F:rRNA binding"/>
    <property type="evidence" value="ECO:0007669"/>
    <property type="project" value="UniProtKB-UniRule"/>
</dbReference>
<dbReference type="GO" id="GO:0003735">
    <property type="term" value="F:structural constituent of ribosome"/>
    <property type="evidence" value="ECO:0007669"/>
    <property type="project" value="InterPro"/>
</dbReference>
<dbReference type="GO" id="GO:0000049">
    <property type="term" value="F:tRNA binding"/>
    <property type="evidence" value="ECO:0007669"/>
    <property type="project" value="UniProtKB-UniRule"/>
</dbReference>
<dbReference type="GO" id="GO:0006412">
    <property type="term" value="P:translation"/>
    <property type="evidence" value="ECO:0007669"/>
    <property type="project" value="UniProtKB-UniRule"/>
</dbReference>
<dbReference type="CDD" id="cd14869">
    <property type="entry name" value="uS7_Bacteria"/>
    <property type="match status" value="1"/>
</dbReference>
<dbReference type="FunFam" id="1.10.455.10:FF:000001">
    <property type="entry name" value="30S ribosomal protein S7"/>
    <property type="match status" value="1"/>
</dbReference>
<dbReference type="Gene3D" id="1.10.455.10">
    <property type="entry name" value="Ribosomal protein S7 domain"/>
    <property type="match status" value="1"/>
</dbReference>
<dbReference type="HAMAP" id="MF_00480_B">
    <property type="entry name" value="Ribosomal_uS7_B"/>
    <property type="match status" value="1"/>
</dbReference>
<dbReference type="InterPro" id="IPR000235">
    <property type="entry name" value="Ribosomal_uS7"/>
</dbReference>
<dbReference type="InterPro" id="IPR005717">
    <property type="entry name" value="Ribosomal_uS7_bac/org-type"/>
</dbReference>
<dbReference type="InterPro" id="IPR020606">
    <property type="entry name" value="Ribosomal_uS7_CS"/>
</dbReference>
<dbReference type="InterPro" id="IPR023798">
    <property type="entry name" value="Ribosomal_uS7_dom"/>
</dbReference>
<dbReference type="InterPro" id="IPR036823">
    <property type="entry name" value="Ribosomal_uS7_dom_sf"/>
</dbReference>
<dbReference type="NCBIfam" id="TIGR01029">
    <property type="entry name" value="rpsG_bact"/>
    <property type="match status" value="1"/>
</dbReference>
<dbReference type="PANTHER" id="PTHR11205">
    <property type="entry name" value="RIBOSOMAL PROTEIN S7"/>
    <property type="match status" value="1"/>
</dbReference>
<dbReference type="Pfam" id="PF00177">
    <property type="entry name" value="Ribosomal_S7"/>
    <property type="match status" value="1"/>
</dbReference>
<dbReference type="PIRSF" id="PIRSF002122">
    <property type="entry name" value="RPS7p_RPS7a_RPS5e_RPS7o"/>
    <property type="match status" value="1"/>
</dbReference>
<dbReference type="SUPFAM" id="SSF47973">
    <property type="entry name" value="Ribosomal protein S7"/>
    <property type="match status" value="1"/>
</dbReference>
<dbReference type="PROSITE" id="PS00052">
    <property type="entry name" value="RIBOSOMAL_S7"/>
    <property type="match status" value="1"/>
</dbReference>